<evidence type="ECO:0000250" key="1">
    <source>
        <dbReference type="UniProtKB" id="P38182"/>
    </source>
</evidence>
<evidence type="ECO:0000305" key="2"/>
<evidence type="ECO:0000305" key="3">
    <source>
    </source>
</evidence>
<dbReference type="EMBL" id="EF107741">
    <property type="protein sequence ID" value="ABO31079.1"/>
    <property type="molecule type" value="Genomic_DNA"/>
</dbReference>
<dbReference type="EMBL" id="AM920427">
    <property type="protein sequence ID" value="CAP80164.1"/>
    <property type="molecule type" value="Genomic_DNA"/>
</dbReference>
<dbReference type="RefSeq" id="XP_002557382.1">
    <property type="nucleotide sequence ID" value="XM_002557336.1"/>
</dbReference>
<dbReference type="SMR" id="A7KAL9"/>
<dbReference type="STRING" id="500485.A7KAL9"/>
<dbReference type="GeneID" id="8315252"/>
<dbReference type="KEGG" id="pcs:N7525_002005"/>
<dbReference type="VEuPathDB" id="FungiDB:PCH_Pc12g05370"/>
<dbReference type="eggNOG" id="KOG1654">
    <property type="taxonomic scope" value="Eukaryota"/>
</dbReference>
<dbReference type="HOGENOM" id="CLU_119276_0_1_1"/>
<dbReference type="OMA" id="AVYQEHK"/>
<dbReference type="OrthoDB" id="6738456at2759"/>
<dbReference type="BioCyc" id="PCHR:PC12G05370-MONOMER"/>
<dbReference type="Proteomes" id="UP000000724">
    <property type="component" value="Contig Pc00c12"/>
</dbReference>
<dbReference type="GO" id="GO:0000421">
    <property type="term" value="C:autophagosome membrane"/>
    <property type="evidence" value="ECO:0007669"/>
    <property type="project" value="UniProtKB-SubCell"/>
</dbReference>
<dbReference type="GO" id="GO:0031410">
    <property type="term" value="C:cytoplasmic vesicle"/>
    <property type="evidence" value="ECO:0007669"/>
    <property type="project" value="UniProtKB-KW"/>
</dbReference>
<dbReference type="GO" id="GO:0006914">
    <property type="term" value="P:autophagy"/>
    <property type="evidence" value="ECO:0007669"/>
    <property type="project" value="UniProtKB-KW"/>
</dbReference>
<dbReference type="GO" id="GO:0015031">
    <property type="term" value="P:protein transport"/>
    <property type="evidence" value="ECO:0007669"/>
    <property type="project" value="UniProtKB-KW"/>
</dbReference>
<dbReference type="CDD" id="cd16128">
    <property type="entry name" value="Ubl_ATG8"/>
    <property type="match status" value="1"/>
</dbReference>
<dbReference type="FunFam" id="3.10.20.90:FF:000010">
    <property type="entry name" value="Autophagy-related protein"/>
    <property type="match status" value="1"/>
</dbReference>
<dbReference type="Gene3D" id="3.10.20.90">
    <property type="entry name" value="Phosphatidylinositol 3-kinase Catalytic Subunit, Chain A, domain 1"/>
    <property type="match status" value="1"/>
</dbReference>
<dbReference type="InterPro" id="IPR004241">
    <property type="entry name" value="Atg8-like"/>
</dbReference>
<dbReference type="InterPro" id="IPR029071">
    <property type="entry name" value="Ubiquitin-like_domsf"/>
</dbReference>
<dbReference type="PANTHER" id="PTHR10969">
    <property type="entry name" value="MICROTUBULE-ASSOCIATED PROTEINS 1A/1B LIGHT CHAIN 3-RELATED"/>
    <property type="match status" value="1"/>
</dbReference>
<dbReference type="Pfam" id="PF02991">
    <property type="entry name" value="ATG8"/>
    <property type="match status" value="1"/>
</dbReference>
<dbReference type="SUPFAM" id="SSF54236">
    <property type="entry name" value="Ubiquitin-like"/>
    <property type="match status" value="1"/>
</dbReference>
<comment type="function">
    <text evidence="1 3">Ubiquitin-like modifier involved in autophagosome formation. With atg4, mediates the delivery of the autophagosomes to the vacuole via the microtubule cytoskeleton. Required for selective autophagic degradation of the nucleus (nucleophagy) as well as for mitophagy which contributes to regulate mitochondrial quantity and quality by eliminating the mitochondria to a basal level to fulfill cellular energy requirements and preventing excess ROS production. Participates also in membrane fusion events that take place in the early secretory pathway. Also involved in endoplasmic reticulum-specific autophagic process and is essential for the survival of cells subjected to severe ER stress. The atg8-PE conjugate mediates tethering between adjacent membranes and stimulates membrane hemifusion, leading to expansion of the autophagosomal membrane during autophagy.</text>
</comment>
<comment type="subcellular location">
    <subcellularLocation>
        <location evidence="1">Cytoplasmic vesicle</location>
        <location evidence="1">Autophagosome membrane</location>
        <topology evidence="1">Lipid-anchor</topology>
    </subcellularLocation>
    <subcellularLocation>
        <location evidence="1">Vacuole membrane</location>
        <topology evidence="1">Lipid-anchor</topology>
    </subcellularLocation>
</comment>
<comment type="PTM">
    <text evidence="1">The C-terminal 2 residues are removed by atg4 to expose Gly-116 at the C-terminus. The c-terminal Gly is then amidated with phosphatidylethanolamine by an activating system similar to that for ubiquitin.</text>
</comment>
<comment type="similarity">
    <text evidence="2">Belongs to the ATG8 family.</text>
</comment>
<sequence>MRSKFKDEHPFEKRKAEAERIRQKYADRIPVICEKVEKSDIATIDKKKYLVPADLTVGQFVYVIRKRIKLSPEKAIFIFVDEVLPPTAALMSSIYEEHKDEDGFLYITYSGENTFGDL</sequence>
<gene>
    <name type="primary">atg8</name>
    <name type="ORF">Pc12g05370</name>
</gene>
<keyword id="KW-0072">Autophagy</keyword>
<keyword id="KW-0968">Cytoplasmic vesicle</keyword>
<keyword id="KW-0449">Lipoprotein</keyword>
<keyword id="KW-0472">Membrane</keyword>
<keyword id="KW-0653">Protein transport</keyword>
<keyword id="KW-1185">Reference proteome</keyword>
<keyword id="KW-0813">Transport</keyword>
<keyword id="KW-0833">Ubl conjugation pathway</keyword>
<keyword id="KW-0926">Vacuole</keyword>
<accession>A7KAL9</accession>
<accession>B6GZ65</accession>
<name>ATG8_PENRW</name>
<organism>
    <name type="scientific">Penicillium rubens (strain ATCC 28089 / DSM 1075 / NRRL 1951 / Wisconsin 54-1255)</name>
    <name type="common">Penicillium chrysogenum</name>
    <dbReference type="NCBI Taxonomy" id="500485"/>
    <lineage>
        <taxon>Eukaryota</taxon>
        <taxon>Fungi</taxon>
        <taxon>Dikarya</taxon>
        <taxon>Ascomycota</taxon>
        <taxon>Pezizomycotina</taxon>
        <taxon>Eurotiomycetes</taxon>
        <taxon>Eurotiomycetidae</taxon>
        <taxon>Eurotiales</taxon>
        <taxon>Aspergillaceae</taxon>
        <taxon>Penicillium</taxon>
        <taxon>Penicillium chrysogenum species complex</taxon>
    </lineage>
</organism>
<feature type="chain" id="PRO_0000317894" description="Autophagy-related protein 8">
    <location>
        <begin position="1"/>
        <end position="116"/>
    </location>
</feature>
<feature type="propeptide" id="PRO_0000317895" description="Removed in mature form" evidence="1">
    <location>
        <begin position="117"/>
        <end position="118"/>
    </location>
</feature>
<feature type="site" description="Cleavage; by atg4" evidence="1">
    <location>
        <begin position="116"/>
        <end position="117"/>
    </location>
</feature>
<feature type="lipid moiety-binding region" description="Phosphatidylethanolamine amidated glycine" evidence="1">
    <location>
        <position position="116"/>
    </location>
</feature>
<proteinExistence type="inferred from homology"/>
<reference key="1">
    <citation type="journal article" date="2007" name="Autophagy">
        <title>ATG genes involved in non-selective autophagy are conserved from yeast to man, but the selective Cvt and pexophagy pathways also require organism-specific genes.</title>
        <authorList>
            <person name="Meijer W.H."/>
            <person name="van der Klei I.J."/>
            <person name="Veenhuis M."/>
            <person name="Kiel J.A.K.W."/>
        </authorList>
    </citation>
    <scope>NUCLEOTIDE SEQUENCE [GENOMIC DNA]</scope>
    <scope>FUNCTION</scope>
</reference>
<reference key="2">
    <citation type="journal article" date="2008" name="Nat. Biotechnol.">
        <title>Genome sequencing and analysis of the filamentous fungus Penicillium chrysogenum.</title>
        <authorList>
            <person name="van den Berg M.A."/>
            <person name="Albang R."/>
            <person name="Albermann K."/>
            <person name="Badger J.H."/>
            <person name="Daran J.-M."/>
            <person name="Driessen A.J.M."/>
            <person name="Garcia-Estrada C."/>
            <person name="Fedorova N.D."/>
            <person name="Harris D.M."/>
            <person name="Heijne W.H.M."/>
            <person name="Joardar V.S."/>
            <person name="Kiel J.A.K.W."/>
            <person name="Kovalchuk A."/>
            <person name="Martin J.F."/>
            <person name="Nierman W.C."/>
            <person name="Nijland J.G."/>
            <person name="Pronk J.T."/>
            <person name="Roubos J.A."/>
            <person name="van der Klei I.J."/>
            <person name="van Peij N.N.M.E."/>
            <person name="Veenhuis M."/>
            <person name="von Doehren H."/>
            <person name="Wagner C."/>
            <person name="Wortman J.R."/>
            <person name="Bovenberg R.A.L."/>
        </authorList>
    </citation>
    <scope>NUCLEOTIDE SEQUENCE [LARGE SCALE GENOMIC DNA]</scope>
    <source>
        <strain>ATCC 28089 / DSM 1075 / NRRL 1951 / Wisconsin 54-1255</strain>
    </source>
</reference>
<protein>
    <recommendedName>
        <fullName>Autophagy-related protein 8</fullName>
    </recommendedName>
    <alternativeName>
        <fullName>Autophagy-related ubiquitin-like modifier atg8</fullName>
    </alternativeName>
</protein>